<protein>
    <recommendedName>
        <fullName evidence="1">Nucleoid-associated protein MAE_23910</fullName>
    </recommendedName>
</protein>
<organism>
    <name type="scientific">Microcystis aeruginosa (strain NIES-843 / IAM M-2473)</name>
    <dbReference type="NCBI Taxonomy" id="449447"/>
    <lineage>
        <taxon>Bacteria</taxon>
        <taxon>Bacillati</taxon>
        <taxon>Cyanobacteriota</taxon>
        <taxon>Cyanophyceae</taxon>
        <taxon>Oscillatoriophycideae</taxon>
        <taxon>Chroococcales</taxon>
        <taxon>Microcystaceae</taxon>
        <taxon>Microcystis</taxon>
    </lineage>
</organism>
<evidence type="ECO:0000255" key="1">
    <source>
        <dbReference type="HAMAP-Rule" id="MF_00274"/>
    </source>
</evidence>
<comment type="function">
    <text evidence="1">Binds to DNA and alters its conformation. May be involved in regulation of gene expression, nucleoid organization and DNA protection.</text>
</comment>
<comment type="subunit">
    <text evidence="1">Homodimer.</text>
</comment>
<comment type="subcellular location">
    <subcellularLocation>
        <location evidence="1">Cytoplasm</location>
        <location evidence="1">Nucleoid</location>
    </subcellularLocation>
</comment>
<comment type="similarity">
    <text evidence="1">Belongs to the YbaB/EbfC family.</text>
</comment>
<dbReference type="EMBL" id="AP009552">
    <property type="protein sequence ID" value="BAG02213.1"/>
    <property type="molecule type" value="Genomic_DNA"/>
</dbReference>
<dbReference type="RefSeq" id="WP_012265540.1">
    <property type="nucleotide sequence ID" value="NC_010296.1"/>
</dbReference>
<dbReference type="SMR" id="B0JH61"/>
<dbReference type="STRING" id="449447.MAE_23910"/>
<dbReference type="PaxDb" id="449447-MAE_23910"/>
<dbReference type="EnsemblBacteria" id="BAG02213">
    <property type="protein sequence ID" value="BAG02213"/>
    <property type="gene ID" value="MAE_23910"/>
</dbReference>
<dbReference type="KEGG" id="mar:MAE_23910"/>
<dbReference type="PATRIC" id="fig|449447.4.peg.2187"/>
<dbReference type="eggNOG" id="COG0718">
    <property type="taxonomic scope" value="Bacteria"/>
</dbReference>
<dbReference type="HOGENOM" id="CLU_140930_0_1_3"/>
<dbReference type="BioCyc" id="MAER449447:MAE_RS10430-MONOMER"/>
<dbReference type="Proteomes" id="UP000001510">
    <property type="component" value="Chromosome"/>
</dbReference>
<dbReference type="GO" id="GO:0043590">
    <property type="term" value="C:bacterial nucleoid"/>
    <property type="evidence" value="ECO:0007669"/>
    <property type="project" value="UniProtKB-UniRule"/>
</dbReference>
<dbReference type="GO" id="GO:0005829">
    <property type="term" value="C:cytosol"/>
    <property type="evidence" value="ECO:0007669"/>
    <property type="project" value="TreeGrafter"/>
</dbReference>
<dbReference type="GO" id="GO:0003677">
    <property type="term" value="F:DNA binding"/>
    <property type="evidence" value="ECO:0007669"/>
    <property type="project" value="UniProtKB-UniRule"/>
</dbReference>
<dbReference type="Gene3D" id="3.30.1310.10">
    <property type="entry name" value="Nucleoid-associated protein YbaB-like domain"/>
    <property type="match status" value="1"/>
</dbReference>
<dbReference type="HAMAP" id="MF_00274">
    <property type="entry name" value="DNA_YbaB_EbfC"/>
    <property type="match status" value="1"/>
</dbReference>
<dbReference type="InterPro" id="IPR036894">
    <property type="entry name" value="YbaB-like_sf"/>
</dbReference>
<dbReference type="InterPro" id="IPR004401">
    <property type="entry name" value="YbaB/EbfC"/>
</dbReference>
<dbReference type="NCBIfam" id="TIGR00103">
    <property type="entry name" value="DNA_YbaB_EbfC"/>
    <property type="match status" value="1"/>
</dbReference>
<dbReference type="PANTHER" id="PTHR33449">
    <property type="entry name" value="NUCLEOID-ASSOCIATED PROTEIN YBAB"/>
    <property type="match status" value="1"/>
</dbReference>
<dbReference type="PANTHER" id="PTHR33449:SF1">
    <property type="entry name" value="NUCLEOID-ASSOCIATED PROTEIN YBAB"/>
    <property type="match status" value="1"/>
</dbReference>
<dbReference type="Pfam" id="PF02575">
    <property type="entry name" value="YbaB_DNA_bd"/>
    <property type="match status" value="1"/>
</dbReference>
<dbReference type="PIRSF" id="PIRSF004555">
    <property type="entry name" value="UCP004555"/>
    <property type="match status" value="1"/>
</dbReference>
<dbReference type="SUPFAM" id="SSF82607">
    <property type="entry name" value="YbaB-like"/>
    <property type="match status" value="1"/>
</dbReference>
<name>Y2391_MICAN</name>
<feature type="chain" id="PRO_1000114622" description="Nucleoid-associated protein MAE_23910">
    <location>
        <begin position="1"/>
        <end position="114"/>
    </location>
</feature>
<accession>B0JH61</accession>
<keyword id="KW-0963">Cytoplasm</keyword>
<keyword id="KW-0238">DNA-binding</keyword>
<reference key="1">
    <citation type="journal article" date="2007" name="DNA Res.">
        <title>Complete genomic structure of the bloom-forming toxic cyanobacterium Microcystis aeruginosa NIES-843.</title>
        <authorList>
            <person name="Kaneko T."/>
            <person name="Nakajima N."/>
            <person name="Okamoto S."/>
            <person name="Suzuki I."/>
            <person name="Tanabe Y."/>
            <person name="Tamaoki M."/>
            <person name="Nakamura Y."/>
            <person name="Kasai F."/>
            <person name="Watanabe A."/>
            <person name="Kawashima K."/>
            <person name="Kishida Y."/>
            <person name="Ono A."/>
            <person name="Shimizu Y."/>
            <person name="Takahashi C."/>
            <person name="Minami C."/>
            <person name="Fujishiro T."/>
            <person name="Kohara M."/>
            <person name="Katoh M."/>
            <person name="Nakazaki N."/>
            <person name="Nakayama S."/>
            <person name="Yamada M."/>
            <person name="Tabata S."/>
            <person name="Watanabe M.M."/>
        </authorList>
    </citation>
    <scope>NUCLEOTIDE SEQUENCE [LARGE SCALE GENOMIC DNA]</scope>
    <source>
        <strain>NIES-843 / IAM M-247</strain>
    </source>
</reference>
<sequence length="114" mass="12346">MAQGQGFGFGLGKIKELQDAFQKAQQVQQGAKVLQEELENMEIPGQSENGLVTVYLSGNQEPRGIEIDPALLSQDLEIVAGSILEAMKVAYDASTETMRSKMEELTSGLNIPSM</sequence>
<gene>
    <name type="ordered locus">MAE_23910</name>
</gene>
<proteinExistence type="inferred from homology"/>